<keyword id="KW-0012">Acyltransferase</keyword>
<keyword id="KW-0963">Cytoplasm</keyword>
<keyword id="KW-0808">Transferase</keyword>
<reference evidence="10" key="1">
    <citation type="journal article" date="2000" name="Biochem. J.">
        <title>Characterization of N-myristoyltransferase from Plasmodium falciparum.</title>
        <authorList>
            <person name="Gunaratne R.S."/>
            <person name="Sajid M."/>
            <person name="Ling I.T."/>
            <person name="Tripathi R."/>
            <person name="Pachebat J.A."/>
            <person name="Holder A.A."/>
        </authorList>
    </citation>
    <scope>NUCLEOTIDE SEQUENCE [GENOMIC DNA]</scope>
    <scope>FUNCTION</scope>
    <scope>CATALYTIC ACTIVITY</scope>
    <scope>DEVELOPMENTAL STAGE</scope>
    <source>
        <strain evidence="5">T9/96</strain>
    </source>
</reference>
<reference evidence="9" key="2">
    <citation type="journal article" date="2009" name="Mol. Biochem. Parasitol.">
        <title>Myristoylated adenylate kinase-2 of Plasmodium falciparum forms a heterodimer with myristoyltransferase.</title>
        <authorList>
            <person name="Rahlfs S."/>
            <person name="Koncarevic S."/>
            <person name="Iozef R."/>
            <person name="Mailu B.M."/>
            <person name="Savvides S.N."/>
            <person name="Schirmer R.H."/>
            <person name="Becker K."/>
        </authorList>
    </citation>
    <scope>FUNCTION</scope>
    <scope>CATALYTIC ACTIVITY</scope>
    <scope>INTERACTION WITH AK2</scope>
    <source>
        <strain evidence="5">T9/96</strain>
    </source>
</reference>
<evidence type="ECO:0000250" key="1">
    <source>
        <dbReference type="UniProtKB" id="P30419"/>
    </source>
</evidence>
<evidence type="ECO:0000250" key="2">
    <source>
        <dbReference type="UniProtKB" id="Q8ILW6"/>
    </source>
</evidence>
<evidence type="ECO:0000255" key="3">
    <source>
        <dbReference type="RuleBase" id="RU000586"/>
    </source>
</evidence>
<evidence type="ECO:0000255" key="4">
    <source>
        <dbReference type="RuleBase" id="RU004178"/>
    </source>
</evidence>
<evidence type="ECO:0000269" key="5">
    <source>
    </source>
</evidence>
<evidence type="ECO:0000269" key="6">
    <source>
    </source>
</evidence>
<evidence type="ECO:0000303" key="7">
    <source>
    </source>
</evidence>
<evidence type="ECO:0000303" key="8">
    <source>
    </source>
</evidence>
<evidence type="ECO:0000305" key="9"/>
<evidence type="ECO:0000312" key="10">
    <source>
        <dbReference type="EMBL" id="AAF18461.1"/>
    </source>
</evidence>
<proteinExistence type="evidence at protein level"/>
<gene>
    <name evidence="7" type="primary">NMT</name>
</gene>
<sequence length="410" mass="47970">MNDDKKDFVGRDLYQLIRNAKDKIKIDYKFWYTQPVPKINDEFDENVNEPFISDNKVEDVRKEEYKLPSGYAWCVCDITKENDRSDIYNLLTDNYVEDDDNVFRFNYSSEFLLWALSSPNYVKNWHIGVKYESTNKLVGFISAIPIDMCVNKNIIKMAEVNFLCVHKSLRSKRLAPVLIKEITRRINLESIWQAIYTAGVYLPKPISTARYFHRSINVKKLIEIGFSCLNTRLTMSRAIKLYRIDDTLNIKNLRLMKKKDIDGLQKLLNEHLKQYNLHAIFSKEDVAHWFTPIDQVIYTYVNEENGEIKDLISFYSLPSKVLGNNKYNILNAAFSFYNITTTTTFKNLIQDAICLAKRNNFDVFNALEVMDNYSVFQDLKFGEGDGSLKYYLYNWKCASCHPSKIGIVLL</sequence>
<comment type="function">
    <text evidence="2 5 6">Adds a myristoyl group to the N-terminal glycine residue of certain cellular proteins (PubMed:10816442, PubMed:18973776). Myristoylates adenylate kinase AK2 (PubMed:18973776). During the asexual blood stage, may myristoylate proteins such as ARO, CDPK1 and GAP45 (By similarity). Probably by mediating protein myristoylation, plays a role in the assembly of the inner membrane complex during the early stages of schizogony and in the formation of rhoptries in the late stages and thus merozoite egress (By similarity).</text>
</comment>
<comment type="catalytic activity">
    <reaction evidence="3 5 6">
        <text>N-terminal glycyl-[protein] + tetradecanoyl-CoA = N-tetradecanoylglycyl-[protein] + CoA + H(+)</text>
        <dbReference type="Rhea" id="RHEA:15521"/>
        <dbReference type="Rhea" id="RHEA-COMP:12666"/>
        <dbReference type="Rhea" id="RHEA-COMP:12667"/>
        <dbReference type="ChEBI" id="CHEBI:15378"/>
        <dbReference type="ChEBI" id="CHEBI:57287"/>
        <dbReference type="ChEBI" id="CHEBI:57385"/>
        <dbReference type="ChEBI" id="CHEBI:64723"/>
        <dbReference type="ChEBI" id="CHEBI:133050"/>
        <dbReference type="EC" id="2.3.1.97"/>
    </reaction>
</comment>
<comment type="subunit">
    <text evidence="6">Heterodimer composed of NMT and AK2; AK2 myristoylation stabilizes the complex.</text>
</comment>
<comment type="subcellular location">
    <subcellularLocation>
        <location evidence="1">Cytoplasm</location>
    </subcellularLocation>
</comment>
<comment type="developmental stage">
    <text evidence="5">Expressed during the parasite blood stage.</text>
</comment>
<comment type="similarity">
    <text evidence="4">Belongs to the NMT family.</text>
</comment>
<protein>
    <recommendedName>
        <fullName evidence="3">Glycylpeptide N-tetradecanoyltransferase</fullName>
        <ecNumber evidence="3 5 6">2.3.1.97</ecNumber>
    </recommendedName>
    <alternativeName>
        <fullName evidence="7">Myristoyl-CoA:protein N-myristoyltransferase</fullName>
    </alternativeName>
    <alternativeName>
        <fullName evidence="7">N-myristoyltransferase</fullName>
        <shortName evidence="8">PfNMT</shortName>
    </alternativeName>
</protein>
<feature type="chain" id="PRO_0000455417" description="Glycylpeptide N-tetradecanoyltransferase">
    <location>
        <begin position="1"/>
        <end position="410"/>
    </location>
</feature>
<feature type="binding site" evidence="1">
    <location>
        <position position="30"/>
    </location>
    <ligand>
        <name>tetradecanoyl-CoA</name>
        <dbReference type="ChEBI" id="CHEBI:57385"/>
    </ligand>
</feature>
<feature type="binding site" evidence="1">
    <location>
        <position position="31"/>
    </location>
    <ligand>
        <name>tetradecanoyl-CoA</name>
        <dbReference type="ChEBI" id="CHEBI:57385"/>
    </ligand>
</feature>
<feature type="binding site" evidence="1">
    <location>
        <position position="162"/>
    </location>
    <ligand>
        <name>tetradecanoyl-CoA</name>
        <dbReference type="ChEBI" id="CHEBI:57385"/>
    </ligand>
</feature>
<feature type="binding site" evidence="1">
    <location>
        <position position="163"/>
    </location>
    <ligand>
        <name>tetradecanoyl-CoA</name>
        <dbReference type="ChEBI" id="CHEBI:57385"/>
    </ligand>
</feature>
<feature type="binding site" evidence="1">
    <location>
        <position position="164"/>
    </location>
    <ligand>
        <name>tetradecanoyl-CoA</name>
        <dbReference type="ChEBI" id="CHEBI:57385"/>
    </ligand>
</feature>
<feature type="binding site" evidence="1">
    <location>
        <position position="165"/>
    </location>
    <ligand>
        <name>tetradecanoyl-CoA</name>
        <dbReference type="ChEBI" id="CHEBI:57385"/>
    </ligand>
</feature>
<feature type="binding site" evidence="1">
    <location>
        <position position="171"/>
    </location>
    <ligand>
        <name>tetradecanoyl-CoA</name>
        <dbReference type="ChEBI" id="CHEBI:57385"/>
    </ligand>
</feature>
<feature type="binding site" evidence="1">
    <location>
        <position position="173"/>
    </location>
    <ligand>
        <name>tetradecanoyl-CoA</name>
        <dbReference type="ChEBI" id="CHEBI:57385"/>
    </ligand>
</feature>
<feature type="binding site" evidence="1">
    <location>
        <position position="174"/>
    </location>
    <ligand>
        <name>tetradecanoyl-CoA</name>
        <dbReference type="ChEBI" id="CHEBI:57385"/>
    </ligand>
</feature>
<feature type="binding site" evidence="1">
    <location>
        <position position="175"/>
    </location>
    <ligand>
        <name>tetradecanoyl-CoA</name>
        <dbReference type="ChEBI" id="CHEBI:57385"/>
    </ligand>
</feature>
<organism evidence="10">
    <name type="scientific">Plasmodium falciparum</name>
    <dbReference type="NCBI Taxonomy" id="5833"/>
    <lineage>
        <taxon>Eukaryota</taxon>
        <taxon>Sar</taxon>
        <taxon>Alveolata</taxon>
        <taxon>Apicomplexa</taxon>
        <taxon>Aconoidasida</taxon>
        <taxon>Haemosporida</taxon>
        <taxon>Plasmodiidae</taxon>
        <taxon>Plasmodium</taxon>
        <taxon>Plasmodium (Laverania)</taxon>
    </lineage>
</organism>
<accession>Q9U419</accession>
<name>NMT_PLAFA</name>
<dbReference type="EC" id="2.3.1.97" evidence="3 5 6"/>
<dbReference type="EMBL" id="AF206306">
    <property type="protein sequence ID" value="AAF18461.1"/>
    <property type="molecule type" value="Genomic_DNA"/>
</dbReference>
<dbReference type="SMR" id="Q9U419"/>
<dbReference type="VEuPathDB" id="PlasmoDB:PF3D7_1412800"/>
<dbReference type="VEuPathDB" id="PlasmoDB:Pf7G8-2_000488000"/>
<dbReference type="VEuPathDB" id="PlasmoDB:Pf7G8_140018200"/>
<dbReference type="VEuPathDB" id="PlasmoDB:PfCD01_140018500"/>
<dbReference type="VEuPathDB" id="PlasmoDB:PfDd2_140017400"/>
<dbReference type="VEuPathDB" id="PlasmoDB:PfGA01_140018500"/>
<dbReference type="VEuPathDB" id="PlasmoDB:PfGB4_140019000"/>
<dbReference type="VEuPathDB" id="PlasmoDB:PfGN01_140018100"/>
<dbReference type="VEuPathDB" id="PlasmoDB:PfHB3_140018700"/>
<dbReference type="VEuPathDB" id="PlasmoDB:PfIT_140019400"/>
<dbReference type="VEuPathDB" id="PlasmoDB:PfKE01_140018100"/>
<dbReference type="VEuPathDB" id="PlasmoDB:PfKH01_140018400"/>
<dbReference type="VEuPathDB" id="PlasmoDB:PfKH02_140018700"/>
<dbReference type="VEuPathDB" id="PlasmoDB:PfML01_140018300"/>
<dbReference type="VEuPathDB" id="PlasmoDB:PfNF135_140018300"/>
<dbReference type="VEuPathDB" id="PlasmoDB:PfNF166_140017000"/>
<dbReference type="VEuPathDB" id="PlasmoDB:PfNF54_140017800"/>
<dbReference type="VEuPathDB" id="PlasmoDB:PfSD01_140016300"/>
<dbReference type="VEuPathDB" id="PlasmoDB:PfSN01_140020200"/>
<dbReference type="VEuPathDB" id="PlasmoDB:PfTG01_140018200"/>
<dbReference type="OMA" id="GWKRDWH"/>
<dbReference type="BRENDA" id="2.3.1.97">
    <property type="organism ID" value="4889"/>
</dbReference>
<dbReference type="GO" id="GO:0005737">
    <property type="term" value="C:cytoplasm"/>
    <property type="evidence" value="ECO:0007669"/>
    <property type="project" value="UniProtKB-SubCell"/>
</dbReference>
<dbReference type="GO" id="GO:0004379">
    <property type="term" value="F:glycylpeptide N-tetradecanoyltransferase activity"/>
    <property type="evidence" value="ECO:0000314"/>
    <property type="project" value="UniProtKB"/>
</dbReference>
<dbReference type="GO" id="GO:0006499">
    <property type="term" value="P:N-terminal protein myristoylation"/>
    <property type="evidence" value="ECO:0000314"/>
    <property type="project" value="UniProtKB"/>
</dbReference>
<dbReference type="FunFam" id="3.40.630.170:FF:000001">
    <property type="entry name" value="Glycylpeptide N-tetradecanoyltransferase"/>
    <property type="match status" value="1"/>
</dbReference>
<dbReference type="Gene3D" id="3.40.630.170">
    <property type="match status" value="1"/>
</dbReference>
<dbReference type="InterPro" id="IPR016181">
    <property type="entry name" value="Acyl_CoA_acyltransferase"/>
</dbReference>
<dbReference type="InterPro" id="IPR000903">
    <property type="entry name" value="NMT"/>
</dbReference>
<dbReference type="InterPro" id="IPR022677">
    <property type="entry name" value="NMT_C"/>
</dbReference>
<dbReference type="InterPro" id="IPR022678">
    <property type="entry name" value="NMT_CS"/>
</dbReference>
<dbReference type="InterPro" id="IPR022676">
    <property type="entry name" value="NMT_N"/>
</dbReference>
<dbReference type="PANTHER" id="PTHR11377:SF5">
    <property type="entry name" value="GLYCYLPEPTIDE N-TETRADECANOYLTRANSFERASE"/>
    <property type="match status" value="1"/>
</dbReference>
<dbReference type="PANTHER" id="PTHR11377">
    <property type="entry name" value="N-MYRISTOYL TRANSFERASE"/>
    <property type="match status" value="1"/>
</dbReference>
<dbReference type="Pfam" id="PF01233">
    <property type="entry name" value="NMT"/>
    <property type="match status" value="1"/>
</dbReference>
<dbReference type="Pfam" id="PF02799">
    <property type="entry name" value="NMT_C"/>
    <property type="match status" value="1"/>
</dbReference>
<dbReference type="PIRSF" id="PIRSF015892">
    <property type="entry name" value="N-myristl_transf"/>
    <property type="match status" value="1"/>
</dbReference>
<dbReference type="SUPFAM" id="SSF55729">
    <property type="entry name" value="Acyl-CoA N-acyltransferases (Nat)"/>
    <property type="match status" value="2"/>
</dbReference>
<dbReference type="PROSITE" id="PS00975">
    <property type="entry name" value="NMT_1"/>
    <property type="match status" value="1"/>
</dbReference>
<dbReference type="PROSITE" id="PS00976">
    <property type="entry name" value="NMT_2"/>
    <property type="match status" value="1"/>
</dbReference>